<keyword id="KW-0489">Methyltransferase</keyword>
<keyword id="KW-0949">S-adenosyl-L-methionine</keyword>
<keyword id="KW-0808">Transferase</keyword>
<dbReference type="EC" id="2.1.1.-" evidence="4"/>
<dbReference type="EMBL" id="KX449366">
    <property type="protein sequence ID" value="AQM58289.1"/>
    <property type="molecule type" value="Genomic_DNA"/>
</dbReference>
<dbReference type="SMR" id="P9WEU7"/>
<dbReference type="VEuPathDB" id="FungiDB:ATEG_02436"/>
<dbReference type="GO" id="GO:0008168">
    <property type="term" value="F:methyltransferase activity"/>
    <property type="evidence" value="ECO:0007669"/>
    <property type="project" value="UniProtKB-KW"/>
</dbReference>
<dbReference type="GO" id="GO:0032259">
    <property type="term" value="P:methylation"/>
    <property type="evidence" value="ECO:0007669"/>
    <property type="project" value="UniProtKB-KW"/>
</dbReference>
<dbReference type="Gene3D" id="3.40.50.150">
    <property type="entry name" value="Vaccinia Virus protein VP39"/>
    <property type="match status" value="1"/>
</dbReference>
<dbReference type="InterPro" id="IPR051128">
    <property type="entry name" value="EgtD_Methyltrsf_superfamily"/>
</dbReference>
<dbReference type="InterPro" id="IPR019257">
    <property type="entry name" value="MeTrfase_dom"/>
</dbReference>
<dbReference type="InterPro" id="IPR017804">
    <property type="entry name" value="MeTrfase_EgtD-like"/>
</dbReference>
<dbReference type="InterPro" id="IPR029063">
    <property type="entry name" value="SAM-dependent_MTases_sf"/>
</dbReference>
<dbReference type="InterPro" id="IPR017805">
    <property type="entry name" value="SAM_MeTrfase_EasF-type_put"/>
</dbReference>
<dbReference type="NCBIfam" id="TIGR03439">
    <property type="entry name" value="methyl_EasF"/>
    <property type="match status" value="1"/>
</dbReference>
<dbReference type="PANTHER" id="PTHR43397">
    <property type="entry name" value="ERGOTHIONEINE BIOSYNTHESIS PROTEIN 1"/>
    <property type="match status" value="1"/>
</dbReference>
<dbReference type="PANTHER" id="PTHR43397:SF2">
    <property type="entry name" value="HISTIDINE-SPECIFIC METHYLTRANSFERASE SAM-DEPENDENT DOMAIN-CONTAINING PROTEIN"/>
    <property type="match status" value="1"/>
</dbReference>
<dbReference type="Pfam" id="PF10017">
    <property type="entry name" value="Methyltransf_33"/>
    <property type="match status" value="1"/>
</dbReference>
<dbReference type="PIRSF" id="PIRSF018005">
    <property type="entry name" value="UCP018005"/>
    <property type="match status" value="1"/>
</dbReference>
<feature type="chain" id="PRO_0000450603" description="N-methyltransferase benX">
    <location>
        <begin position="1"/>
        <end position="361"/>
    </location>
</feature>
<protein>
    <recommendedName>
        <fullName evidence="2">N-methyltransferase benX</fullName>
        <ecNumber evidence="4">2.1.1.-</ecNumber>
    </recommendedName>
    <alternativeName>
        <fullName evidence="2">Benzomalvin biosynthesis cluster protein X</fullName>
    </alternativeName>
</protein>
<organism>
    <name type="scientific">Aspergillus terreus</name>
    <dbReference type="NCBI Taxonomy" id="33178"/>
    <lineage>
        <taxon>Eukaryota</taxon>
        <taxon>Fungi</taxon>
        <taxon>Dikarya</taxon>
        <taxon>Ascomycota</taxon>
        <taxon>Pezizomycotina</taxon>
        <taxon>Eurotiomycetes</taxon>
        <taxon>Eurotiomycetidae</taxon>
        <taxon>Eurotiales</taxon>
        <taxon>Aspergillaceae</taxon>
        <taxon>Aspergillus</taxon>
        <taxon>Aspergillus subgen. Circumdati</taxon>
    </lineage>
</organism>
<evidence type="ECO:0000269" key="1">
    <source>
    </source>
</evidence>
<evidence type="ECO:0000303" key="2">
    <source>
    </source>
</evidence>
<evidence type="ECO:0000305" key="3"/>
<evidence type="ECO:0000305" key="4">
    <source>
    </source>
</evidence>
<comment type="function">
    <text evidence="1">N-methyltransferase; part of the gene cluster that mediates the biosynthesis of benzomalvin A and D (PubMed:28604695). The pathway begins with the loading of amino acid precursors onto the A domains of the non ribosomal peptide synthetases benY and benZ (PubMed:28604695). BenY and the A1 domain of benZ are loaded with anthranilate (Anth), while the A2 domain of benZ is loaded with phenylalanine (Phe) (PubMed:28604695). N-methylation of Phe by the methyltransferase benX may happen before loading of Phe onto benZ, after loading of Phe, or after dipeptide formation (PubMed:28604695). Condensation of Anth with the secondary amine of NmPhe or Phe is catalyzed by the C1 domain of benZ, forming a dipeptide intermediate (PubMed:28604695). This is followed by in trans condensation of the Anth-NmPhe dipeptide with Anth bound to the T domain of benY by the C2 domain of benZ to form the linear tripeptide Anth-NmPhe-Anth (PubMed:28604695). Cyclization and release of the tripeptide is then catalyzed by the C-terminal C domain of benY and the resulting 11-member macrocyclic intermediate is expected to spontaneously collapse to form the benzodiazepine core (PubMed:28604695). Benzomalvin A is in conformational equilibrium with its atropisomer, benzomalvin D (PubMed:28604695).</text>
</comment>
<comment type="pathway">
    <text evidence="1">Secondary metabolite biosynthesis.</text>
</comment>
<comment type="disruption phenotype">
    <text evidence="1">Leads to a tenfold decrease in the amount of benzomalvins A and D, but not their complete abolishment.</text>
</comment>
<comment type="similarity">
    <text evidence="3">Belongs to the methyltransferase superfamily.</text>
</comment>
<proteinExistence type="inferred from homology"/>
<reference key="1">
    <citation type="journal article" date="2017" name="Nat. Chem. Biol.">
        <title>A scalable platform to identify fungal secondary metabolites and their gene clusters.</title>
        <authorList>
            <person name="Clevenger K.D."/>
            <person name="Bok J.W."/>
            <person name="Ye R."/>
            <person name="Miley G.P."/>
            <person name="Verdan M.H."/>
            <person name="Velk T."/>
            <person name="Chen C."/>
            <person name="Yang K."/>
            <person name="Robey M.T."/>
            <person name="Gao P."/>
            <person name="Lamprecht M."/>
            <person name="Thomas P.M."/>
            <person name="Islam M.N."/>
            <person name="Palmer J.M."/>
            <person name="Wu C.C."/>
            <person name="Keller N.P."/>
            <person name="Kelleher N.L."/>
        </authorList>
    </citation>
    <scope>NUCLEOTIDE SEQUENCE [GENOMIC DNA]</scope>
    <scope>FUNCTION</scope>
    <scope>DISRUPTION PHENOTYPE</scope>
    <scope>PATHWAY</scope>
    <source>
        <strain>ATCC 20542 / MF4845</strain>
    </source>
</reference>
<sequence length="361" mass="40175">MSAVEIPHPSGCRVYDIRQQAQGSMNLQTAITDGLLSTPKTLPSLLLWDAEGLRLFDEFAHSASYYLRDKELTILRDRSHEIVTVVPAQSILVELGSLQKTGRLIRALEKQQKPVRYYAVDVSLSGLTNSLTELRKELGDLHFVDITGLLGTYDDCVNWISNPSGQDPMSSPTVTFLWMGNSISNLNHYIDSSSLLSQFRLACDASRLRCQFLIAADACQDAQVVRTAYDAQNPTLRAFLLNGLSHANSVLGRAAFSPQDWSCESGFYPEQGQLEVYYVPLRDVELDVGGDRVYRVQRGERVRAISSGKWGKKLMGRVACAAGFQMNHAWGDSAGQYYFYHLYGGTQTFTSGNERVSVAHR</sequence>
<accession>P9WEU7</accession>
<gene>
    <name evidence="2" type="primary">benX</name>
</gene>
<name>BENX_ASPTE</name>